<accession>P0DUC4</accession>
<reference key="1">
    <citation type="journal article" date="2017" name="Toxicon">
        <title>Identification of short single disulfide-containing contryphans from the venom of cone snails using de novo mass spectrometry-based sequencing methods.</title>
        <authorList>
            <person name="Franklin J.B."/>
            <person name="Rajesh R.P."/>
            <person name="Vinithkumar N.V."/>
            <person name="Kirubagaran R."/>
        </authorList>
    </citation>
    <scope>PROTEIN SEQUENCE</scope>
    <scope>SUBCELLULAR LOCATION</scope>
    <scope>MASS SPECTROMETRY</scope>
    <scope>AMIDATION AT CYS-7</scope>
    <scope>HYDROXYLATION AT PRO-6</scope>
    <scope>DISULFIDE BOND</scope>
    <source>
        <tissue>Venom</tissue>
    </source>
</reference>
<keyword id="KW-0027">Amidation</keyword>
<keyword id="KW-0903">Direct protein sequencing</keyword>
<keyword id="KW-1015">Disulfide bond</keyword>
<keyword id="KW-0379">Hydroxylation</keyword>
<keyword id="KW-0872">Ion channel impairing toxin</keyword>
<keyword id="KW-0964">Secreted</keyword>
<keyword id="KW-0800">Toxin</keyword>
<feature type="peptide" id="PRO_0000451478" description="Contryphan Zo747/Zo763" evidence="5">
    <location>
        <begin position="1"/>
        <end position="7"/>
    </location>
</feature>
<feature type="modified residue" description="4-hydroxyproline; partial" evidence="5">
    <location>
        <position position="6"/>
    </location>
</feature>
<feature type="modified residue" description="Cysteine amide" evidence="5">
    <location>
        <position position="7"/>
    </location>
</feature>
<feature type="disulfide bond" evidence="5">
    <location>
        <begin position="3"/>
        <end position="7"/>
    </location>
</feature>
<sequence>SPCPFPC</sequence>
<comment type="function">
    <text evidence="1 2 3 4">Its target is unknown, but this toxin may modulate voltage-activated calcium channels (Cav) or calcium-dependent potassium channels (KCa).</text>
</comment>
<comment type="subcellular location">
    <subcellularLocation>
        <location evidence="5">Secreted</location>
    </subcellularLocation>
</comment>
<comment type="tissue specificity">
    <text evidence="8">Expressed by the venom duct.</text>
</comment>
<comment type="domain">
    <text evidence="7">The cysteine framework is C-C.</text>
</comment>
<comment type="mass spectrometry">
    <text>Average mass, Zo763 (with hydroxyPro-6).</text>
</comment>
<comment type="mass spectrometry">
    <text>Average mass, Zo747.</text>
</comment>
<comment type="similarity">
    <text evidence="7">Belongs to the O2 superfamily. Contryphan family.</text>
</comment>
<dbReference type="GO" id="GO:0005576">
    <property type="term" value="C:extracellular region"/>
    <property type="evidence" value="ECO:0007669"/>
    <property type="project" value="UniProtKB-SubCell"/>
</dbReference>
<dbReference type="GO" id="GO:0099106">
    <property type="term" value="F:ion channel regulator activity"/>
    <property type="evidence" value="ECO:0007669"/>
    <property type="project" value="UniProtKB-KW"/>
</dbReference>
<dbReference type="GO" id="GO:0090729">
    <property type="term" value="F:toxin activity"/>
    <property type="evidence" value="ECO:0007669"/>
    <property type="project" value="UniProtKB-KW"/>
</dbReference>
<name>COW_CONZO</name>
<organism>
    <name type="scientific">Conus zonatus</name>
    <name type="common">Zoned cone</name>
    <dbReference type="NCBI Taxonomy" id="754466"/>
    <lineage>
        <taxon>Eukaryota</taxon>
        <taxon>Metazoa</taxon>
        <taxon>Spiralia</taxon>
        <taxon>Lophotrochozoa</taxon>
        <taxon>Mollusca</taxon>
        <taxon>Gastropoda</taxon>
        <taxon>Caenogastropoda</taxon>
        <taxon>Neogastropoda</taxon>
        <taxon>Conoidea</taxon>
        <taxon>Conidae</taxon>
        <taxon>Conus</taxon>
        <taxon>Stephanoconus</taxon>
    </lineage>
</organism>
<evidence type="ECO:0000250" key="1">
    <source>
        <dbReference type="UniProtKB" id="P0C248"/>
    </source>
</evidence>
<evidence type="ECO:0000250" key="2">
    <source>
        <dbReference type="UniProtKB" id="P0C250"/>
    </source>
</evidence>
<evidence type="ECO:0000250" key="3">
    <source>
        <dbReference type="UniProtKB" id="P62903"/>
    </source>
</evidence>
<evidence type="ECO:0000250" key="4">
    <source>
        <dbReference type="UniProtKB" id="P83047"/>
    </source>
</evidence>
<evidence type="ECO:0000269" key="5">
    <source>
    </source>
</evidence>
<evidence type="ECO:0000303" key="6">
    <source>
    </source>
</evidence>
<evidence type="ECO:0000305" key="7"/>
<evidence type="ECO:0000305" key="8">
    <source>
    </source>
</evidence>
<proteinExistence type="evidence at protein level"/>
<protein>
    <recommendedName>
        <fullName evidence="6">Contryphan Zo747/Zo763</fullName>
    </recommendedName>
</protein>